<comment type="function">
    <text evidence="1">One of the essential components for the initiation of protein synthesis. Stabilizes the binding of IF-2 and IF-3 on the 30S subunit to which N-formylmethionyl-tRNA(fMet) subsequently binds. Helps modulate mRNA selection, yielding the 30S pre-initiation complex (PIC). Upon addition of the 50S ribosomal subunit IF-1, IF-2 and IF-3 are released leaving the mature 70S translation initiation complex.</text>
</comment>
<comment type="subunit">
    <text evidence="1">Component of the 30S ribosomal translation pre-initiation complex which assembles on the 30S ribosome in the order IF-2 and IF-3, IF-1 and N-formylmethionyl-tRNA(fMet); mRNA recruitment can occur at any time during PIC assembly.</text>
</comment>
<comment type="subcellular location">
    <subcellularLocation>
        <location evidence="1">Cytoplasm</location>
    </subcellularLocation>
</comment>
<comment type="similarity">
    <text evidence="1">Belongs to the IF-1 family.</text>
</comment>
<organism>
    <name type="scientific">Mesomycoplasma hyopneumoniae (strain 232)</name>
    <name type="common">Mycoplasma hyopneumoniae</name>
    <dbReference type="NCBI Taxonomy" id="295358"/>
    <lineage>
        <taxon>Bacteria</taxon>
        <taxon>Bacillati</taxon>
        <taxon>Mycoplasmatota</taxon>
        <taxon>Mycoplasmoidales</taxon>
        <taxon>Metamycoplasmataceae</taxon>
        <taxon>Mesomycoplasma</taxon>
    </lineage>
</organism>
<accession>Q601J2</accession>
<protein>
    <recommendedName>
        <fullName evidence="1">Translation initiation factor IF-1</fullName>
    </recommendedName>
</protein>
<dbReference type="EMBL" id="AE017332">
    <property type="protein sequence ID" value="AAV27466.1"/>
    <property type="molecule type" value="Genomic_DNA"/>
</dbReference>
<dbReference type="RefSeq" id="WP_011206047.1">
    <property type="nucleotide sequence ID" value="NC_006360.1"/>
</dbReference>
<dbReference type="SMR" id="Q601J2"/>
<dbReference type="GeneID" id="41334471"/>
<dbReference type="KEGG" id="mhy:mhp210"/>
<dbReference type="eggNOG" id="COG0361">
    <property type="taxonomic scope" value="Bacteria"/>
</dbReference>
<dbReference type="HOGENOM" id="CLU_151267_1_0_14"/>
<dbReference type="PhylomeDB" id="Q601J2"/>
<dbReference type="Proteomes" id="UP000006822">
    <property type="component" value="Chromosome"/>
</dbReference>
<dbReference type="GO" id="GO:0005829">
    <property type="term" value="C:cytosol"/>
    <property type="evidence" value="ECO:0007669"/>
    <property type="project" value="TreeGrafter"/>
</dbReference>
<dbReference type="GO" id="GO:0043022">
    <property type="term" value="F:ribosome binding"/>
    <property type="evidence" value="ECO:0007669"/>
    <property type="project" value="UniProtKB-UniRule"/>
</dbReference>
<dbReference type="GO" id="GO:0019843">
    <property type="term" value="F:rRNA binding"/>
    <property type="evidence" value="ECO:0007669"/>
    <property type="project" value="UniProtKB-UniRule"/>
</dbReference>
<dbReference type="GO" id="GO:0003743">
    <property type="term" value="F:translation initiation factor activity"/>
    <property type="evidence" value="ECO:0007669"/>
    <property type="project" value="UniProtKB-UniRule"/>
</dbReference>
<dbReference type="FunFam" id="2.40.50.140:FF:000002">
    <property type="entry name" value="Translation initiation factor IF-1"/>
    <property type="match status" value="1"/>
</dbReference>
<dbReference type="Gene3D" id="2.40.50.140">
    <property type="entry name" value="Nucleic acid-binding proteins"/>
    <property type="match status" value="1"/>
</dbReference>
<dbReference type="HAMAP" id="MF_00075">
    <property type="entry name" value="IF_1"/>
    <property type="match status" value="1"/>
</dbReference>
<dbReference type="InterPro" id="IPR012340">
    <property type="entry name" value="NA-bd_OB-fold"/>
</dbReference>
<dbReference type="InterPro" id="IPR006196">
    <property type="entry name" value="RNA-binding_domain_S1_IF1"/>
</dbReference>
<dbReference type="InterPro" id="IPR003029">
    <property type="entry name" value="S1_domain"/>
</dbReference>
<dbReference type="InterPro" id="IPR004368">
    <property type="entry name" value="TIF_IF1"/>
</dbReference>
<dbReference type="NCBIfam" id="TIGR00008">
    <property type="entry name" value="infA"/>
    <property type="match status" value="1"/>
</dbReference>
<dbReference type="PANTHER" id="PTHR33370">
    <property type="entry name" value="TRANSLATION INITIATION FACTOR IF-1, CHLOROPLASTIC"/>
    <property type="match status" value="1"/>
</dbReference>
<dbReference type="PANTHER" id="PTHR33370:SF1">
    <property type="entry name" value="TRANSLATION INITIATION FACTOR IF-1, CHLOROPLASTIC"/>
    <property type="match status" value="1"/>
</dbReference>
<dbReference type="Pfam" id="PF01176">
    <property type="entry name" value="eIF-1a"/>
    <property type="match status" value="1"/>
</dbReference>
<dbReference type="SMART" id="SM00316">
    <property type="entry name" value="S1"/>
    <property type="match status" value="1"/>
</dbReference>
<dbReference type="SUPFAM" id="SSF50249">
    <property type="entry name" value="Nucleic acid-binding proteins"/>
    <property type="match status" value="1"/>
</dbReference>
<dbReference type="PROSITE" id="PS50832">
    <property type="entry name" value="S1_IF1_TYPE"/>
    <property type="match status" value="1"/>
</dbReference>
<gene>
    <name evidence="1" type="primary">infA</name>
    <name type="ordered locus">mhp210</name>
</gene>
<reference key="1">
    <citation type="journal article" date="2004" name="J. Bacteriol.">
        <title>The genome sequence of Mycoplasma hyopneumoniae strain 232, the agent of swine mycoplasmosis.</title>
        <authorList>
            <person name="Minion F.C."/>
            <person name="Lefkowitz E.J."/>
            <person name="Madsen M.L."/>
            <person name="Cleary B.J."/>
            <person name="Swartzell S.M."/>
            <person name="Mahairas G.G."/>
        </authorList>
    </citation>
    <scope>NUCLEOTIDE SEQUENCE [LARGE SCALE GENOMIC DNA]</scope>
    <source>
        <strain>232</strain>
    </source>
</reference>
<keyword id="KW-0963">Cytoplasm</keyword>
<keyword id="KW-0396">Initiation factor</keyword>
<keyword id="KW-0648">Protein biosynthesis</keyword>
<keyword id="KW-0694">RNA-binding</keyword>
<keyword id="KW-0699">rRNA-binding</keyword>
<proteinExistence type="inferred from homology"/>
<name>IF1_MESH2</name>
<sequence length="75" mass="8666">MANLPKEQKLLFQGKVTHVFNAQEYEVTLENGIKLNCHIAGKMKIHHIKIIIGDMVKVEISPYDLSKGRIVYRFK</sequence>
<evidence type="ECO:0000255" key="1">
    <source>
        <dbReference type="HAMAP-Rule" id="MF_00075"/>
    </source>
</evidence>
<feature type="chain" id="PRO_0000095821" description="Translation initiation factor IF-1">
    <location>
        <begin position="1"/>
        <end position="75"/>
    </location>
</feature>
<feature type="domain" description="S1-like" evidence="1">
    <location>
        <begin position="1"/>
        <end position="75"/>
    </location>
</feature>